<keyword id="KW-0175">Coiled coil</keyword>
<keyword id="KW-0963">Cytoplasm</keyword>
<keyword id="KW-0206">Cytoskeleton</keyword>
<keyword id="KW-0333">Golgi apparatus</keyword>
<keyword id="KW-0493">Microtubule</keyword>
<keyword id="KW-0653">Protein transport</keyword>
<keyword id="KW-1185">Reference proteome</keyword>
<keyword id="KW-0813">Transport</keyword>
<reference key="1">
    <citation type="submission" date="2004-06" db="EMBL/GenBank/DDBJ databases">
        <authorList>
            <consortium name="NIH - Xenopus Gene Collection (XGC) project"/>
        </authorList>
    </citation>
    <scope>NUCLEOTIDE SEQUENCE [LARGE SCALE MRNA]</scope>
    <source>
        <tissue>Ovary</tissue>
    </source>
</reference>
<accession>Q6GQ73</accession>
<protein>
    <recommendedName>
        <fullName>Protein Hook homolog 3</fullName>
    </recommendedName>
</protein>
<name>HOOK3_XENLA</name>
<proteinExistence type="evidence at transcript level"/>
<comment type="function">
    <text evidence="1 2">Acts as an adapter protein linking the dynein motor complex to various cargos and converts dynein from a non-processive to a highly processive motor in the presence of dynactin. Facilitates the interaction between dynein and dynactin and activates dynein processivity (the ability to move along a microtubule for a long distance without falling off the track). Predominantly recruits 2 dyneins, which increases both the force and speed of the microtubule motor. Component of the FTS/Hook/FHIP complex (FHF complex). The FHF complex may function to promote vesicle trafficking and/or fusion via the homotypic vesicular protein sorting complex (the HOPS complex). May regulate clearance of endocytosed receptors such as MSR1. Participates in defining the architecture and localization of the Golgi complex. FHF complex promotes the distribution of AP-4 complex to the perinuclear area of the cell.</text>
</comment>
<comment type="subunit">
    <text evidence="1">Interacts with microtubules.</text>
</comment>
<comment type="subcellular location">
    <subcellularLocation>
        <location evidence="1">Cytoplasm</location>
        <location evidence="1">Cytoskeleton</location>
    </subcellularLocation>
    <subcellularLocation>
        <location evidence="1">Golgi apparatus</location>
    </subcellularLocation>
</comment>
<comment type="similarity">
    <text evidence="6">Belongs to the hook family.</text>
</comment>
<organism>
    <name type="scientific">Xenopus laevis</name>
    <name type="common">African clawed frog</name>
    <dbReference type="NCBI Taxonomy" id="8355"/>
    <lineage>
        <taxon>Eukaryota</taxon>
        <taxon>Metazoa</taxon>
        <taxon>Chordata</taxon>
        <taxon>Craniata</taxon>
        <taxon>Vertebrata</taxon>
        <taxon>Euteleostomi</taxon>
        <taxon>Amphibia</taxon>
        <taxon>Batrachia</taxon>
        <taxon>Anura</taxon>
        <taxon>Pipoidea</taxon>
        <taxon>Pipidae</taxon>
        <taxon>Xenopodinae</taxon>
        <taxon>Xenopus</taxon>
        <taxon>Xenopus</taxon>
    </lineage>
</organism>
<sequence>MQSLDRVDLCESLLTWIQTFHVDAPCKTVEDLTSGVAMAMVLQKIDPVYFDENWLNRIKTDVGDNWRLKISNLKKILKGILDYNHEILGHQVNDFTLPDVILIGEHSDASELGRMLQLILGCAVKCEQKQEYIQAIMMMEESVQHVVMTAIQELMSKETPVSIGTDAYAELDRQLKKANEELNDALSAKEEIAQRCHELDMQVAGLQEEKSSLLAENQILMERMNQSDSLEDPNSPAGRRHLQLQTQLEQLQEETFRLEASKDDYRIRCEELEKEITEFRQQNEDLITLADEAQSLKDEMDVLRHSSDKVAKLESQVDSYKKKLEDLGDLRRQVKLLEEKNTMYMQNTVSLEEELRKANAARSQLETYKRQVVELQNRLSEESKKADKLEFEYKRLKEKIDSLQKEKDRLRSERDSLKETIEELRCVQAQEGQLTSAGLMPLGNQEPTDSLAAEIVTPEIKEKLIRLQHENKMLKINQEGSDNEKISLLQSLLDDANMRKNELETENRLVNQRLIEMQSQVEELQKSLQEQGAKTEDSLLLKKKLEEHLEKLHEANNELQKKRAIIEDLEPRYNNSSMKIEELQDALRKKEEDMKQMEERYKKYLEKAKSVIRTLDPKQNQGTGPEIQALKNQLQERDKMFVSLEKEFEKTKTQRDQEEKLIVSAWYNMGMTLHKKAAEDRLASTGSGQSFLARQRQATSSRRSYPGHVQPATASDVIA</sequence>
<evidence type="ECO:0000250" key="1">
    <source>
        <dbReference type="UniProtKB" id="Q86VS8"/>
    </source>
</evidence>
<evidence type="ECO:0000250" key="2">
    <source>
        <dbReference type="UniProtKB" id="Q8BUK6"/>
    </source>
</evidence>
<evidence type="ECO:0000255" key="3"/>
<evidence type="ECO:0000255" key="4">
    <source>
        <dbReference type="PROSITE-ProRule" id="PRU00044"/>
    </source>
</evidence>
<evidence type="ECO:0000256" key="5">
    <source>
        <dbReference type="SAM" id="MobiDB-lite"/>
    </source>
</evidence>
<evidence type="ECO:0000305" key="6"/>
<dbReference type="EMBL" id="BC072875">
    <property type="protein sequence ID" value="AAH72875.1"/>
    <property type="molecule type" value="mRNA"/>
</dbReference>
<dbReference type="RefSeq" id="NP_001085515.1">
    <property type="nucleotide sequence ID" value="NM_001092046.1"/>
</dbReference>
<dbReference type="SMR" id="Q6GQ73"/>
<dbReference type="DNASU" id="443941"/>
<dbReference type="GeneID" id="443941"/>
<dbReference type="KEGG" id="xla:443941"/>
<dbReference type="AGR" id="Xenbase:XB-GENE-6067276"/>
<dbReference type="CTD" id="443941"/>
<dbReference type="Xenbase" id="XB-GENE-6067276">
    <property type="gene designation" value="hook3.S"/>
</dbReference>
<dbReference type="OrthoDB" id="49395at2759"/>
<dbReference type="Proteomes" id="UP000186698">
    <property type="component" value="Chromosome 1S"/>
</dbReference>
<dbReference type="Bgee" id="443941">
    <property type="expression patterns" value="Expressed in blastula and 19 other cell types or tissues"/>
</dbReference>
<dbReference type="GO" id="GO:0005813">
    <property type="term" value="C:centrosome"/>
    <property type="evidence" value="ECO:0000318"/>
    <property type="project" value="GO_Central"/>
</dbReference>
<dbReference type="GO" id="GO:0005737">
    <property type="term" value="C:cytoplasm"/>
    <property type="evidence" value="ECO:0000318"/>
    <property type="project" value="GO_Central"/>
</dbReference>
<dbReference type="GO" id="GO:0005794">
    <property type="term" value="C:Golgi apparatus"/>
    <property type="evidence" value="ECO:0007669"/>
    <property type="project" value="UniProtKB-SubCell"/>
</dbReference>
<dbReference type="GO" id="GO:0005874">
    <property type="term" value="C:microtubule"/>
    <property type="evidence" value="ECO:0007669"/>
    <property type="project" value="UniProtKB-KW"/>
</dbReference>
<dbReference type="GO" id="GO:0051959">
    <property type="term" value="F:dynein light intermediate chain binding"/>
    <property type="evidence" value="ECO:0000318"/>
    <property type="project" value="GO_Central"/>
</dbReference>
<dbReference type="GO" id="GO:0008017">
    <property type="term" value="F:microtubule binding"/>
    <property type="evidence" value="ECO:0000318"/>
    <property type="project" value="GO_Central"/>
</dbReference>
<dbReference type="GO" id="GO:0031122">
    <property type="term" value="P:cytoplasmic microtubule organization"/>
    <property type="evidence" value="ECO:0000318"/>
    <property type="project" value="GO_Central"/>
</dbReference>
<dbReference type="GO" id="GO:0030705">
    <property type="term" value="P:cytoskeleton-dependent intracellular transport"/>
    <property type="evidence" value="ECO:0000318"/>
    <property type="project" value="GO_Central"/>
</dbReference>
<dbReference type="GO" id="GO:0045022">
    <property type="term" value="P:early endosome to late endosome transport"/>
    <property type="evidence" value="ECO:0000250"/>
    <property type="project" value="UniProtKB"/>
</dbReference>
<dbReference type="GO" id="GO:0007032">
    <property type="term" value="P:endosome organization"/>
    <property type="evidence" value="ECO:0000250"/>
    <property type="project" value="UniProtKB"/>
</dbReference>
<dbReference type="GO" id="GO:0008333">
    <property type="term" value="P:endosome to lysosome transport"/>
    <property type="evidence" value="ECO:0000250"/>
    <property type="project" value="UniProtKB"/>
</dbReference>
<dbReference type="GO" id="GO:0007040">
    <property type="term" value="P:lysosome organization"/>
    <property type="evidence" value="ECO:0000250"/>
    <property type="project" value="UniProtKB"/>
</dbReference>
<dbReference type="GO" id="GO:0015031">
    <property type="term" value="P:protein transport"/>
    <property type="evidence" value="ECO:0007669"/>
    <property type="project" value="UniProtKB-KW"/>
</dbReference>
<dbReference type="CDD" id="cd22226">
    <property type="entry name" value="HkD_Hook3"/>
    <property type="match status" value="1"/>
</dbReference>
<dbReference type="FunFam" id="1.10.418.10:FF:000215">
    <property type="entry name" value="Protein Hook homolog 3"/>
    <property type="match status" value="1"/>
</dbReference>
<dbReference type="Gene3D" id="1.10.418.10">
    <property type="entry name" value="Calponin-like domain"/>
    <property type="match status" value="1"/>
</dbReference>
<dbReference type="InterPro" id="IPR001715">
    <property type="entry name" value="CH_dom"/>
</dbReference>
<dbReference type="InterPro" id="IPR036872">
    <property type="entry name" value="CH_dom_sf"/>
</dbReference>
<dbReference type="InterPro" id="IPR008636">
    <property type="entry name" value="Hook_C"/>
</dbReference>
<dbReference type="InterPro" id="IPR043936">
    <property type="entry name" value="HOOK_N"/>
</dbReference>
<dbReference type="PANTHER" id="PTHR18947">
    <property type="entry name" value="HOOK PROTEINS"/>
    <property type="match status" value="1"/>
</dbReference>
<dbReference type="PANTHER" id="PTHR18947:SF38">
    <property type="entry name" value="PROTEIN HOOK HOMOLOG 3"/>
    <property type="match status" value="1"/>
</dbReference>
<dbReference type="Pfam" id="PF05622">
    <property type="entry name" value="HOOK"/>
    <property type="match status" value="1"/>
</dbReference>
<dbReference type="Pfam" id="PF19047">
    <property type="entry name" value="HOOK_N"/>
    <property type="match status" value="1"/>
</dbReference>
<dbReference type="SUPFAM" id="SSF116907">
    <property type="entry name" value="Hook domain"/>
    <property type="match status" value="1"/>
</dbReference>
<dbReference type="PROSITE" id="PS50021">
    <property type="entry name" value="CH"/>
    <property type="match status" value="1"/>
</dbReference>
<gene>
    <name type="primary">hook3</name>
</gene>
<feature type="chain" id="PRO_0000379056" description="Protein Hook homolog 3">
    <location>
        <begin position="1"/>
        <end position="719"/>
    </location>
</feature>
<feature type="domain" description="Calponin-homology (CH)" evidence="4">
    <location>
        <begin position="7"/>
        <end position="123"/>
    </location>
</feature>
<feature type="region of interest" description="Disordered" evidence="5">
    <location>
        <begin position="679"/>
        <end position="719"/>
    </location>
</feature>
<feature type="coiled-coil region" evidence="3">
    <location>
        <begin position="162"/>
        <end position="431"/>
    </location>
</feature>
<feature type="coiled-coil region" evidence="3">
    <location>
        <begin position="459"/>
        <end position="665"/>
    </location>
</feature>
<feature type="compositionally biased region" description="Low complexity" evidence="5">
    <location>
        <begin position="693"/>
        <end position="704"/>
    </location>
</feature>